<proteinExistence type="evidence at transcript level"/>
<sequence length="377" mass="43614">MRGQWSLLLGPARLCLRLLLLLGYRRRCPPLLRGLVQRWRYGKVCLRSLLYNSFGGSDTAVDAAFEPIYWLVDNVIRWCGVVFVVLVIVLTSSIVAIAYLCVLPLILQTYSVPRLCWHFFYSHWNLILIVFHYYQAITTPPGYPPQGRNDMTTVSICKKCINPKPARTHHCSICNRCVLKMDHHCPWLNNCVGHYNHRYFFSFCFFMTLGCVYCSYGSWDLFREAYAAIEKMKQLDKNKLQAVANQTYHQTPPPTFSFRERVTHKSLVYLWFLCSSVALALGALTIWHAVLISRGETSIERHINKKERQRLQAKGRVFRNHYNYGCLDNWKVFLGVDTGRHWLTRVLLPSSHLPHGNGMSWDPPPWVTAHSASVMAV</sequence>
<protein>
    <recommendedName>
        <fullName evidence="3">Palmitoyltransferase ZDHHC16</fullName>
        <ecNumber evidence="3">2.3.1.225</ecNumber>
    </recommendedName>
    <alternativeName>
        <fullName evidence="3">Zinc finger DHHC domain-containing protein 16</fullName>
        <shortName evidence="3">DHHC-16</shortName>
    </alternativeName>
</protein>
<feature type="chain" id="PRO_0000212896" description="Palmitoyltransferase ZDHHC16">
    <location>
        <begin position="1"/>
        <end position="377"/>
    </location>
</feature>
<feature type="topological domain" description="Cytoplasmic" evidence="5">
    <location>
        <begin position="1"/>
        <end position="79"/>
    </location>
</feature>
<feature type="transmembrane region" description="Helical" evidence="5">
    <location>
        <begin position="80"/>
        <end position="100"/>
    </location>
</feature>
<feature type="topological domain" description="Lumenal" evidence="5">
    <location>
        <begin position="101"/>
        <end position="116"/>
    </location>
</feature>
<feature type="transmembrane region" description="Helical" evidence="5">
    <location>
        <begin position="117"/>
        <end position="137"/>
    </location>
</feature>
<feature type="topological domain" description="Cytoplasmic" evidence="5">
    <location>
        <begin position="138"/>
        <end position="198"/>
    </location>
</feature>
<feature type="transmembrane region" description="Helical" evidence="5">
    <location>
        <begin position="199"/>
        <end position="219"/>
    </location>
</feature>
<feature type="topological domain" description="Lumenal" evidence="5">
    <location>
        <begin position="220"/>
        <end position="266"/>
    </location>
</feature>
<feature type="transmembrane region" description="Helical" evidence="5">
    <location>
        <begin position="267"/>
        <end position="287"/>
    </location>
</feature>
<feature type="topological domain" description="Cytoplasmic" evidence="5">
    <location>
        <begin position="288"/>
        <end position="377"/>
    </location>
</feature>
<feature type="domain" description="DHHC" evidence="6">
    <location>
        <begin position="155"/>
        <end position="205"/>
    </location>
</feature>
<feature type="active site" description="S-palmitoyl cysteine intermediate" evidence="2">
    <location>
        <position position="185"/>
    </location>
</feature>
<feature type="splice variant" id="VSP_016273" description="In isoform 2." evidence="7 8">
    <location>
        <begin position="231"/>
        <end position="246"/>
    </location>
</feature>
<accession>Q58CU4</accession>
<accession>Q2HJ39</accession>
<accession>Q58D89</accession>
<gene>
    <name evidence="3" type="primary">ZDHHC16</name>
</gene>
<name>ZDH16_BOVIN</name>
<comment type="function">
    <text evidence="1 3 4">Palmitoyl acyltransferase that mediates palmitoylation of proteins such as PLN and ZDHHC6 (By similarity). Required during embryonic heart development and cardiac function, possibly by mediating palmitoylation of PLN, thereby affecting PLN phosphorylation and homooligomerization (By similarity). Also required for eye development (By similarity). Palmitoylates ZDHHC6, affecting the quaternary assembly of ZDHHC6, its localization, stability and function (By similarity). May play a role in DNA damage response (By similarity). May be involved in apoptosis regulation (By similarity). Involved in the proliferation of neural stem cells by regulating the FGF/ERK pathway (By similarity).</text>
</comment>
<comment type="catalytic activity">
    <reaction evidence="3">
        <text>L-cysteinyl-[protein] + hexadecanoyl-CoA = S-hexadecanoyl-L-cysteinyl-[protein] + CoA</text>
        <dbReference type="Rhea" id="RHEA:36683"/>
        <dbReference type="Rhea" id="RHEA-COMP:10131"/>
        <dbReference type="Rhea" id="RHEA-COMP:11032"/>
        <dbReference type="ChEBI" id="CHEBI:29950"/>
        <dbReference type="ChEBI" id="CHEBI:57287"/>
        <dbReference type="ChEBI" id="CHEBI:57379"/>
        <dbReference type="ChEBI" id="CHEBI:74151"/>
        <dbReference type="EC" id="2.3.1.225"/>
    </reaction>
</comment>
<comment type="subunit">
    <text evidence="3 4">Interacts with ABL1 (By similarity). Interacts with COPS5/JAB1 (By similarity).</text>
</comment>
<comment type="subcellular location">
    <subcellularLocation>
        <location evidence="3">Endoplasmic reticulum membrane</location>
        <topology evidence="4">Multi-pass membrane protein</topology>
    </subcellularLocation>
</comment>
<comment type="alternative products">
    <event type="alternative splicing"/>
    <isoform>
        <id>Q58CU4-1</id>
        <name>1</name>
        <sequence type="displayed"/>
    </isoform>
    <isoform>
        <id>Q58CU4-2</id>
        <name>2</name>
        <sequence type="described" ref="VSP_016273"/>
    </isoform>
</comment>
<comment type="domain">
    <text evidence="2">The DHHC domain is required for palmitoyltransferase activity.</text>
</comment>
<comment type="similarity">
    <text evidence="9">Belongs to the DHHC palmitoyltransferase family.</text>
</comment>
<keyword id="KW-0012">Acyltransferase</keyword>
<keyword id="KW-0025">Alternative splicing</keyword>
<keyword id="KW-0053">Apoptosis</keyword>
<keyword id="KW-0227">DNA damage</keyword>
<keyword id="KW-0256">Endoplasmic reticulum</keyword>
<keyword id="KW-0472">Membrane</keyword>
<keyword id="KW-1185">Reference proteome</keyword>
<keyword id="KW-0808">Transferase</keyword>
<keyword id="KW-0812">Transmembrane</keyword>
<keyword id="KW-1133">Transmembrane helix</keyword>
<reference key="1">
    <citation type="journal article" date="2005" name="BMC Genomics">
        <title>Characterization of 954 bovine full-CDS cDNA sequences.</title>
        <authorList>
            <person name="Harhay G.P."/>
            <person name="Sonstegard T.S."/>
            <person name="Keele J.W."/>
            <person name="Heaton M.P."/>
            <person name="Clawson M.L."/>
            <person name="Snelling W.M."/>
            <person name="Wiedmann R.T."/>
            <person name="Van Tassell C.P."/>
            <person name="Smith T.P.L."/>
        </authorList>
    </citation>
    <scope>NUCLEOTIDE SEQUENCE [LARGE SCALE MRNA] (ISOFORMS 1 AND 2)</scope>
</reference>
<reference key="2">
    <citation type="submission" date="2006-02" db="EMBL/GenBank/DDBJ databases">
        <authorList>
            <consortium name="NIH - Mammalian Gene Collection (MGC) project"/>
        </authorList>
    </citation>
    <scope>NUCLEOTIDE SEQUENCE [LARGE SCALE MRNA] (ISOFORM 2)</scope>
    <source>
        <strain>Hereford</strain>
        <tissue>Uterus</tissue>
    </source>
</reference>
<evidence type="ECO:0000250" key="1">
    <source>
        <dbReference type="UniProtKB" id="B8A4F0"/>
    </source>
</evidence>
<evidence type="ECO:0000250" key="2">
    <source>
        <dbReference type="UniProtKB" id="Q8IUH5"/>
    </source>
</evidence>
<evidence type="ECO:0000250" key="3">
    <source>
        <dbReference type="UniProtKB" id="Q969W1"/>
    </source>
</evidence>
<evidence type="ECO:0000250" key="4">
    <source>
        <dbReference type="UniProtKB" id="Q9ESG8"/>
    </source>
</evidence>
<evidence type="ECO:0000255" key="5"/>
<evidence type="ECO:0000255" key="6">
    <source>
        <dbReference type="PROSITE-ProRule" id="PRU00067"/>
    </source>
</evidence>
<evidence type="ECO:0000303" key="7">
    <source>
    </source>
</evidence>
<evidence type="ECO:0000303" key="8">
    <source ref="2"/>
</evidence>
<evidence type="ECO:0000305" key="9"/>
<dbReference type="EC" id="2.3.1.225" evidence="3"/>
<dbReference type="EMBL" id="BT021708">
    <property type="protein sequence ID" value="AAX46555.1"/>
    <property type="molecule type" value="mRNA"/>
</dbReference>
<dbReference type="EMBL" id="BT021853">
    <property type="protein sequence ID" value="AAX46700.1"/>
    <property type="molecule type" value="mRNA"/>
</dbReference>
<dbReference type="EMBL" id="BC113326">
    <property type="protein sequence ID" value="AAI13327.1"/>
    <property type="molecule type" value="mRNA"/>
</dbReference>
<dbReference type="RefSeq" id="NP_001019653.1">
    <molecule id="Q58CU4-1"/>
    <property type="nucleotide sequence ID" value="NM_001024482.2"/>
</dbReference>
<dbReference type="RefSeq" id="XP_005225537.1">
    <property type="nucleotide sequence ID" value="XM_005225480.2"/>
</dbReference>
<dbReference type="RefSeq" id="XP_005225538.1">
    <property type="nucleotide sequence ID" value="XM_005225481.2"/>
</dbReference>
<dbReference type="RefSeq" id="XP_005225539.1">
    <property type="nucleotide sequence ID" value="XM_005225482.2"/>
</dbReference>
<dbReference type="RefSeq" id="XP_005225541.1">
    <property type="nucleotide sequence ID" value="XM_005225484.2"/>
</dbReference>
<dbReference type="RefSeq" id="XP_010818143.1">
    <property type="nucleotide sequence ID" value="XM_010819841.2"/>
</dbReference>
<dbReference type="RefSeq" id="XP_059737782.1">
    <molecule id="Q58CU4-1"/>
    <property type="nucleotide sequence ID" value="XM_059881799.1"/>
</dbReference>
<dbReference type="SMR" id="Q58CU4"/>
<dbReference type="FunCoup" id="Q58CU4">
    <property type="interactions" value="3754"/>
</dbReference>
<dbReference type="STRING" id="9913.ENSBTAP00000016882"/>
<dbReference type="PaxDb" id="9913-ENSBTAP00000016882"/>
<dbReference type="Ensembl" id="ENSBTAT00000016883.5">
    <molecule id="Q58CU4-2"/>
    <property type="protein sequence ID" value="ENSBTAP00000016883.4"/>
    <property type="gene ID" value="ENSBTAG00000012702.6"/>
</dbReference>
<dbReference type="GeneID" id="506085"/>
<dbReference type="KEGG" id="bta:506085"/>
<dbReference type="CTD" id="84287"/>
<dbReference type="VEuPathDB" id="HostDB:ENSBTAG00000012702"/>
<dbReference type="eggNOG" id="KOG1313">
    <property type="taxonomic scope" value="Eukaryota"/>
</dbReference>
<dbReference type="GeneTree" id="ENSGT00940000155032"/>
<dbReference type="HOGENOM" id="CLU_054274_0_0_1"/>
<dbReference type="InParanoid" id="Q58CU4"/>
<dbReference type="OMA" id="DGIVWDC"/>
<dbReference type="OrthoDB" id="331948at2759"/>
<dbReference type="TreeFam" id="TF320809"/>
<dbReference type="Proteomes" id="UP000009136">
    <property type="component" value="Chromosome 26"/>
</dbReference>
<dbReference type="Bgee" id="ENSBTAG00000012702">
    <property type="expression patterns" value="Expressed in retina and 103 other cell types or tissues"/>
</dbReference>
<dbReference type="GO" id="GO:0005789">
    <property type="term" value="C:endoplasmic reticulum membrane"/>
    <property type="evidence" value="ECO:0007669"/>
    <property type="project" value="UniProtKB-SubCell"/>
</dbReference>
<dbReference type="GO" id="GO:0005794">
    <property type="term" value="C:Golgi apparatus"/>
    <property type="evidence" value="ECO:0000318"/>
    <property type="project" value="GO_Central"/>
</dbReference>
<dbReference type="GO" id="GO:0016409">
    <property type="term" value="F:palmitoyltransferase activity"/>
    <property type="evidence" value="ECO:0000250"/>
    <property type="project" value="UniProtKB"/>
</dbReference>
<dbReference type="GO" id="GO:0019706">
    <property type="term" value="F:protein-cysteine S-palmitoyltransferase activity"/>
    <property type="evidence" value="ECO:0007669"/>
    <property type="project" value="UniProtKB-EC"/>
</dbReference>
<dbReference type="GO" id="GO:0006915">
    <property type="term" value="P:apoptotic process"/>
    <property type="evidence" value="ECO:0007669"/>
    <property type="project" value="UniProtKB-KW"/>
</dbReference>
<dbReference type="GO" id="GO:0006974">
    <property type="term" value="P:DNA damage response"/>
    <property type="evidence" value="ECO:0000250"/>
    <property type="project" value="UniProtKB"/>
</dbReference>
<dbReference type="GO" id="GO:0001654">
    <property type="term" value="P:eye development"/>
    <property type="evidence" value="ECO:0000250"/>
    <property type="project" value="UniProtKB"/>
</dbReference>
<dbReference type="GO" id="GO:0021899">
    <property type="term" value="P:fibroblast growth factor receptor signaling pathway involved in forebrain neuron fate commitment"/>
    <property type="evidence" value="ECO:0000318"/>
    <property type="project" value="GO_Central"/>
</dbReference>
<dbReference type="GO" id="GO:0007507">
    <property type="term" value="P:heart development"/>
    <property type="evidence" value="ECO:0000250"/>
    <property type="project" value="UniProtKB"/>
</dbReference>
<dbReference type="GO" id="GO:0018345">
    <property type="term" value="P:protein palmitoylation"/>
    <property type="evidence" value="ECO:0000250"/>
    <property type="project" value="UniProtKB"/>
</dbReference>
<dbReference type="GO" id="GO:0021537">
    <property type="term" value="P:telencephalon development"/>
    <property type="evidence" value="ECO:0000250"/>
    <property type="project" value="UniProtKB"/>
</dbReference>
<dbReference type="InterPro" id="IPR001594">
    <property type="entry name" value="Palmitoyltrfase_DHHC"/>
</dbReference>
<dbReference type="InterPro" id="IPR039859">
    <property type="entry name" value="PFA4/ZDH16/20/ERF2-like"/>
</dbReference>
<dbReference type="PANTHER" id="PTHR12246">
    <property type="entry name" value="PALMITOYLTRANSFERASE ZDHHC16"/>
    <property type="match status" value="1"/>
</dbReference>
<dbReference type="Pfam" id="PF01529">
    <property type="entry name" value="DHHC"/>
    <property type="match status" value="1"/>
</dbReference>
<dbReference type="PROSITE" id="PS50216">
    <property type="entry name" value="DHHC"/>
    <property type="match status" value="1"/>
</dbReference>
<organism>
    <name type="scientific">Bos taurus</name>
    <name type="common">Bovine</name>
    <dbReference type="NCBI Taxonomy" id="9913"/>
    <lineage>
        <taxon>Eukaryota</taxon>
        <taxon>Metazoa</taxon>
        <taxon>Chordata</taxon>
        <taxon>Craniata</taxon>
        <taxon>Vertebrata</taxon>
        <taxon>Euteleostomi</taxon>
        <taxon>Mammalia</taxon>
        <taxon>Eutheria</taxon>
        <taxon>Laurasiatheria</taxon>
        <taxon>Artiodactyla</taxon>
        <taxon>Ruminantia</taxon>
        <taxon>Pecora</taxon>
        <taxon>Bovidae</taxon>
        <taxon>Bovinae</taxon>
        <taxon>Bos</taxon>
    </lineage>
</organism>